<protein>
    <recommendedName>
        <fullName evidence="1">ATP-dependent Clp protease proteolytic subunit 1</fullName>
        <ecNumber evidence="1">3.4.21.92</ecNumber>
    </recommendedName>
    <alternativeName>
        <fullName evidence="1">Endopeptidase Clp 1</fullName>
    </alternativeName>
</protein>
<keyword id="KW-0963">Cytoplasm</keyword>
<keyword id="KW-0378">Hydrolase</keyword>
<keyword id="KW-0645">Protease</keyword>
<keyword id="KW-0720">Serine protease</keyword>
<dbReference type="EC" id="3.4.21.92" evidence="1"/>
<dbReference type="EMBL" id="AE017283">
    <property type="protein sequence ID" value="AAT83315.1"/>
    <property type="status" value="ALT_INIT"/>
    <property type="molecule type" value="Genomic_DNA"/>
</dbReference>
<dbReference type="SMR" id="Q6A7F0"/>
<dbReference type="MEROPS" id="S14.009"/>
<dbReference type="EnsemblBacteria" id="AAT83315">
    <property type="protein sequence ID" value="AAT83315"/>
    <property type="gene ID" value="PPA1572"/>
</dbReference>
<dbReference type="KEGG" id="pac:PPA1572"/>
<dbReference type="eggNOG" id="COG0740">
    <property type="taxonomic scope" value="Bacteria"/>
</dbReference>
<dbReference type="HOGENOM" id="CLU_058707_3_2_11"/>
<dbReference type="Proteomes" id="UP000000603">
    <property type="component" value="Chromosome"/>
</dbReference>
<dbReference type="GO" id="GO:0005737">
    <property type="term" value="C:cytoplasm"/>
    <property type="evidence" value="ECO:0007669"/>
    <property type="project" value="UniProtKB-SubCell"/>
</dbReference>
<dbReference type="GO" id="GO:0009368">
    <property type="term" value="C:endopeptidase Clp complex"/>
    <property type="evidence" value="ECO:0007669"/>
    <property type="project" value="TreeGrafter"/>
</dbReference>
<dbReference type="GO" id="GO:0004176">
    <property type="term" value="F:ATP-dependent peptidase activity"/>
    <property type="evidence" value="ECO:0007669"/>
    <property type="project" value="InterPro"/>
</dbReference>
<dbReference type="GO" id="GO:0051117">
    <property type="term" value="F:ATPase binding"/>
    <property type="evidence" value="ECO:0007669"/>
    <property type="project" value="TreeGrafter"/>
</dbReference>
<dbReference type="GO" id="GO:0004252">
    <property type="term" value="F:serine-type endopeptidase activity"/>
    <property type="evidence" value="ECO:0007669"/>
    <property type="project" value="UniProtKB-UniRule"/>
</dbReference>
<dbReference type="GO" id="GO:0006515">
    <property type="term" value="P:protein quality control for misfolded or incompletely synthesized proteins"/>
    <property type="evidence" value="ECO:0007669"/>
    <property type="project" value="TreeGrafter"/>
</dbReference>
<dbReference type="CDD" id="cd07017">
    <property type="entry name" value="S14_ClpP_2"/>
    <property type="match status" value="1"/>
</dbReference>
<dbReference type="FunFam" id="3.90.226.10:FF:000002">
    <property type="entry name" value="ATP-dependent Clp protease proteolytic subunit"/>
    <property type="match status" value="1"/>
</dbReference>
<dbReference type="Gene3D" id="3.90.226.10">
    <property type="entry name" value="2-enoyl-CoA Hydratase, Chain A, domain 1"/>
    <property type="match status" value="1"/>
</dbReference>
<dbReference type="HAMAP" id="MF_00444">
    <property type="entry name" value="ClpP"/>
    <property type="match status" value="1"/>
</dbReference>
<dbReference type="InterPro" id="IPR001907">
    <property type="entry name" value="ClpP"/>
</dbReference>
<dbReference type="InterPro" id="IPR029045">
    <property type="entry name" value="ClpP/crotonase-like_dom_sf"/>
</dbReference>
<dbReference type="InterPro" id="IPR023562">
    <property type="entry name" value="ClpP/TepA"/>
</dbReference>
<dbReference type="InterPro" id="IPR033135">
    <property type="entry name" value="ClpP_His_AS"/>
</dbReference>
<dbReference type="InterPro" id="IPR018215">
    <property type="entry name" value="ClpP_Ser_AS"/>
</dbReference>
<dbReference type="NCBIfam" id="NF001368">
    <property type="entry name" value="PRK00277.1"/>
    <property type="match status" value="1"/>
</dbReference>
<dbReference type="NCBIfam" id="NF009205">
    <property type="entry name" value="PRK12553.1"/>
    <property type="match status" value="1"/>
</dbReference>
<dbReference type="PANTHER" id="PTHR10381">
    <property type="entry name" value="ATP-DEPENDENT CLP PROTEASE PROTEOLYTIC SUBUNIT"/>
    <property type="match status" value="1"/>
</dbReference>
<dbReference type="PANTHER" id="PTHR10381:SF26">
    <property type="entry name" value="ATP-DEPENDENT CLP PROTEASE PROTEOLYTIC SUBUNIT-LIKE-RELATED"/>
    <property type="match status" value="1"/>
</dbReference>
<dbReference type="Pfam" id="PF00574">
    <property type="entry name" value="CLP_protease"/>
    <property type="match status" value="1"/>
</dbReference>
<dbReference type="PRINTS" id="PR00127">
    <property type="entry name" value="CLPPROTEASEP"/>
</dbReference>
<dbReference type="SUPFAM" id="SSF52096">
    <property type="entry name" value="ClpP/crotonase"/>
    <property type="match status" value="1"/>
</dbReference>
<dbReference type="PROSITE" id="PS00382">
    <property type="entry name" value="CLP_PROTEASE_HIS"/>
    <property type="match status" value="1"/>
</dbReference>
<dbReference type="PROSITE" id="PS00381">
    <property type="entry name" value="CLP_PROTEASE_SER"/>
    <property type="match status" value="1"/>
</dbReference>
<sequence length="216" mass="23589">MNAEQAEQAAPGGLAPAGPRNDYYIPQWEERTSYGVRRVDPYTKLFEDRIIFLGTPVTDDIANAVMAQLLCLQSMDADRQISMYINSPGGSFTAMTAIYDTMNYVRPDIQTICLGMAASAAAVLLAAGAKGQRLSLPNSTVLIHQPAMGQATYGQATDIEILDDEIQRIRKLMENMLATATGQSVEQISKDIDRDKYLTAQGAKEYGLIDDILTSL</sequence>
<proteinExistence type="inferred from homology"/>
<name>CLPP1_CUTAK</name>
<feature type="chain" id="PRO_0000179615" description="ATP-dependent Clp protease proteolytic subunit 1">
    <location>
        <begin position="1"/>
        <end position="216"/>
    </location>
</feature>
<feature type="active site" description="Nucleophile" evidence="1">
    <location>
        <position position="119"/>
    </location>
</feature>
<feature type="active site" evidence="1">
    <location>
        <position position="144"/>
    </location>
</feature>
<gene>
    <name evidence="1" type="primary">clpP1</name>
    <name type="ordered locus">PPA1572</name>
</gene>
<reference key="1">
    <citation type="journal article" date="2004" name="Science">
        <title>The complete genome sequence of Propionibacterium acnes, a commensal of human skin.</title>
        <authorList>
            <person name="Brueggemann H."/>
            <person name="Henne A."/>
            <person name="Hoster F."/>
            <person name="Liesegang H."/>
            <person name="Wiezer A."/>
            <person name="Strittmatter A."/>
            <person name="Hujer S."/>
            <person name="Duerre P."/>
            <person name="Gottschalk G."/>
        </authorList>
    </citation>
    <scope>NUCLEOTIDE SEQUENCE [LARGE SCALE GENOMIC DNA]</scope>
    <source>
        <strain>DSM 16379 / KPA171202</strain>
    </source>
</reference>
<evidence type="ECO:0000255" key="1">
    <source>
        <dbReference type="HAMAP-Rule" id="MF_00444"/>
    </source>
</evidence>
<evidence type="ECO:0000305" key="2"/>
<comment type="function">
    <text evidence="1">Cleaves peptides in various proteins in a process that requires ATP hydrolysis. Has a chymotrypsin-like activity. Plays a major role in the degradation of misfolded proteins.</text>
</comment>
<comment type="catalytic activity">
    <reaction evidence="1">
        <text>Hydrolysis of proteins to small peptides in the presence of ATP and magnesium. alpha-casein is the usual test substrate. In the absence of ATP, only oligopeptides shorter than five residues are hydrolyzed (such as succinyl-Leu-Tyr-|-NHMec, and Leu-Tyr-Leu-|-Tyr-Trp, in which cleavage of the -Tyr-|-Leu- and -Tyr-|-Trp bonds also occurs).</text>
        <dbReference type="EC" id="3.4.21.92"/>
    </reaction>
</comment>
<comment type="subunit">
    <text evidence="1">Fourteen ClpP subunits assemble into 2 heptameric rings which stack back to back to give a disk-like structure with a central cavity, resembling the structure of eukaryotic proteasomes.</text>
</comment>
<comment type="subcellular location">
    <subcellularLocation>
        <location evidence="1">Cytoplasm</location>
    </subcellularLocation>
</comment>
<comment type="similarity">
    <text evidence="1">Belongs to the peptidase S14 family.</text>
</comment>
<comment type="sequence caution" evidence="2">
    <conflict type="erroneous initiation">
        <sequence resource="EMBL-CDS" id="AAT83315"/>
    </conflict>
</comment>
<accession>Q6A7F0</accession>
<organism>
    <name type="scientific">Cutibacterium acnes (strain DSM 16379 / KPA171202)</name>
    <name type="common">Propionibacterium acnes</name>
    <dbReference type="NCBI Taxonomy" id="267747"/>
    <lineage>
        <taxon>Bacteria</taxon>
        <taxon>Bacillati</taxon>
        <taxon>Actinomycetota</taxon>
        <taxon>Actinomycetes</taxon>
        <taxon>Propionibacteriales</taxon>
        <taxon>Propionibacteriaceae</taxon>
        <taxon>Cutibacterium</taxon>
    </lineage>
</organism>